<reference key="1">
    <citation type="journal article" date="1995" name="Gene">
        <title>Cloning and study of the genetic organization of the exe gene cluster of Aeromonas salmonicida.</title>
        <authorList>
            <person name="Karlyshev A.V."/>
            <person name="Macintyre S."/>
        </authorList>
    </citation>
    <scope>NUCLEOTIDE SEQUENCE [GENOMIC DNA]</scope>
    <source>
        <strain>ATCC 33658 / DSM 19634 / JCM 7874 / NCIMB 1102 / NCTC 12959</strain>
    </source>
</reference>
<evidence type="ECO:0000250" key="1"/>
<evidence type="ECO:0000255" key="2"/>
<evidence type="ECO:0000305" key="3"/>
<organism>
    <name type="scientific">Aeromonas salmonicida</name>
    <dbReference type="NCBI Taxonomy" id="645"/>
    <lineage>
        <taxon>Bacteria</taxon>
        <taxon>Pseudomonadati</taxon>
        <taxon>Pseudomonadota</taxon>
        <taxon>Gammaproteobacteria</taxon>
        <taxon>Aeromonadales</taxon>
        <taxon>Aeromonadaceae</taxon>
        <taxon>Aeromonas</taxon>
    </lineage>
</organism>
<keyword id="KW-0997">Cell inner membrane</keyword>
<keyword id="KW-1003">Cell membrane</keyword>
<keyword id="KW-0472">Membrane</keyword>
<keyword id="KW-0653">Protein transport</keyword>
<keyword id="KW-0812">Transmembrane</keyword>
<keyword id="KW-1133">Transmembrane helix</keyword>
<keyword id="KW-0813">Transport</keyword>
<proteinExistence type="inferred from homology"/>
<accession>P45772</accession>
<name>GSPC_AERSA</name>
<feature type="chain" id="PRO_0000214999" description="Type II secretion system protein C">
    <location>
        <begin position="1"/>
        <end position="290"/>
    </location>
</feature>
<feature type="topological domain" description="Cytoplasmic" evidence="2">
    <location>
        <begin position="1"/>
        <end position="28"/>
    </location>
</feature>
<feature type="transmembrane region" description="Helical" evidence="2">
    <location>
        <begin position="29"/>
        <end position="46"/>
    </location>
</feature>
<feature type="topological domain" description="Periplasmic" evidence="2">
    <location>
        <begin position="47"/>
        <end position="290"/>
    </location>
</feature>
<protein>
    <recommendedName>
        <fullName>Type II secretion system protein C</fullName>
        <shortName>T2SS protein C</shortName>
    </recommendedName>
    <alternativeName>
        <fullName>General secretion pathway protein C</fullName>
    </alternativeName>
</protein>
<comment type="function">
    <text evidence="1">Involved in a type II secretion system (T2SS, formerly general secretion pathway, GSP) for the export of proteins.</text>
</comment>
<comment type="subcellular location">
    <subcellularLocation>
        <location evidence="3">Cell inner membrane</location>
    </subcellularLocation>
</comment>
<comment type="similarity">
    <text evidence="3">Belongs to the GSP C family.</text>
</comment>
<dbReference type="EMBL" id="X80505">
    <property type="protein sequence ID" value="CAA56667.1"/>
    <property type="molecule type" value="Genomic_DNA"/>
</dbReference>
<dbReference type="PIR" id="I39677">
    <property type="entry name" value="S46962"/>
</dbReference>
<dbReference type="SMR" id="P45772"/>
<dbReference type="STRING" id="1233098.GCA_000315855_00771"/>
<dbReference type="KEGG" id="aeo:O23A_p4235"/>
<dbReference type="OMA" id="IARGMFW"/>
<dbReference type="GO" id="GO:0005886">
    <property type="term" value="C:plasma membrane"/>
    <property type="evidence" value="ECO:0007669"/>
    <property type="project" value="UniProtKB-SubCell"/>
</dbReference>
<dbReference type="GO" id="GO:0015627">
    <property type="term" value="C:type II protein secretion system complex"/>
    <property type="evidence" value="ECO:0007669"/>
    <property type="project" value="InterPro"/>
</dbReference>
<dbReference type="GO" id="GO:0015628">
    <property type="term" value="P:protein secretion by the type II secretion system"/>
    <property type="evidence" value="ECO:0007669"/>
    <property type="project" value="InterPro"/>
</dbReference>
<dbReference type="Gene3D" id="2.30.30.830">
    <property type="match status" value="1"/>
</dbReference>
<dbReference type="Gene3D" id="2.30.42.10">
    <property type="match status" value="1"/>
</dbReference>
<dbReference type="InterPro" id="IPR036034">
    <property type="entry name" value="PDZ_sf"/>
</dbReference>
<dbReference type="InterPro" id="IPR024961">
    <property type="entry name" value="T2SS_GspC_N"/>
</dbReference>
<dbReference type="InterPro" id="IPR001639">
    <property type="entry name" value="T2SS_protein-GspC"/>
</dbReference>
<dbReference type="NCBIfam" id="TIGR01713">
    <property type="entry name" value="typeII_sec_gspC"/>
    <property type="match status" value="1"/>
</dbReference>
<dbReference type="Pfam" id="PF11356">
    <property type="entry name" value="T2SSC"/>
    <property type="match status" value="1"/>
</dbReference>
<dbReference type="PRINTS" id="PR00810">
    <property type="entry name" value="BCTERIALGSPC"/>
</dbReference>
<dbReference type="SUPFAM" id="SSF50156">
    <property type="entry name" value="PDZ domain-like"/>
    <property type="match status" value="1"/>
</dbReference>
<dbReference type="PROSITE" id="PS01141">
    <property type="entry name" value="T2SP_C"/>
    <property type="match status" value="1"/>
</dbReference>
<sequence length="290" mass="31302">MTLPFRDDLLSSLLARCKTVPLSRFSQPLFWLLLLLLAHQCAGLTWRLLDLGSQQSSQPWQPAVAGSQGQGKARLDLGGVSRLALFGKAKQQARAADAVAADAPKTQLNAQLNGVLASSDPAKSIAIIAHSGVQNSYGIGDFIDGTQAKVRQVFADRVIIERDARDETLMLDGEEYGKPLPKQGNPDEKLSSVRSELLGNPGKITDYLNISPVRVDGRMVGYRLNPGSNPELFNQLGLVANDMAVSINGLDLRDNAQAMQAMQQVAGATEMTVTVERQGQLYDVYVGLSE</sequence>
<gene>
    <name type="primary">exeC</name>
</gene>